<proteinExistence type="inferred from homology"/>
<gene>
    <name evidence="2" type="primary">rpsL</name>
    <name type="ordered locus">lpl0364</name>
</gene>
<accession>Q5WZL7</accession>
<dbReference type="EMBL" id="CR628337">
    <property type="protein sequence ID" value="CAH14595.1"/>
    <property type="molecule type" value="Genomic_DNA"/>
</dbReference>
<dbReference type="RefSeq" id="WP_004450478.1">
    <property type="nucleotide sequence ID" value="NC_006369.1"/>
</dbReference>
<dbReference type="SMR" id="Q5WZL7"/>
<dbReference type="GeneID" id="40924717"/>
<dbReference type="GeneID" id="57034327"/>
<dbReference type="KEGG" id="lpf:lpl0364"/>
<dbReference type="LegioList" id="lpl0364"/>
<dbReference type="HOGENOM" id="CLU_104295_1_2_6"/>
<dbReference type="Proteomes" id="UP000002517">
    <property type="component" value="Chromosome"/>
</dbReference>
<dbReference type="GO" id="GO:0015935">
    <property type="term" value="C:small ribosomal subunit"/>
    <property type="evidence" value="ECO:0007669"/>
    <property type="project" value="InterPro"/>
</dbReference>
<dbReference type="GO" id="GO:0019843">
    <property type="term" value="F:rRNA binding"/>
    <property type="evidence" value="ECO:0007669"/>
    <property type="project" value="UniProtKB-UniRule"/>
</dbReference>
<dbReference type="GO" id="GO:0003735">
    <property type="term" value="F:structural constituent of ribosome"/>
    <property type="evidence" value="ECO:0007669"/>
    <property type="project" value="InterPro"/>
</dbReference>
<dbReference type="GO" id="GO:0000049">
    <property type="term" value="F:tRNA binding"/>
    <property type="evidence" value="ECO:0007669"/>
    <property type="project" value="UniProtKB-UniRule"/>
</dbReference>
<dbReference type="GO" id="GO:0006412">
    <property type="term" value="P:translation"/>
    <property type="evidence" value="ECO:0007669"/>
    <property type="project" value="UniProtKB-UniRule"/>
</dbReference>
<dbReference type="CDD" id="cd03368">
    <property type="entry name" value="Ribosomal_S12"/>
    <property type="match status" value="1"/>
</dbReference>
<dbReference type="FunFam" id="2.40.50.140:FF:000001">
    <property type="entry name" value="30S ribosomal protein S12"/>
    <property type="match status" value="1"/>
</dbReference>
<dbReference type="Gene3D" id="2.40.50.140">
    <property type="entry name" value="Nucleic acid-binding proteins"/>
    <property type="match status" value="1"/>
</dbReference>
<dbReference type="HAMAP" id="MF_00403_B">
    <property type="entry name" value="Ribosomal_uS12_B"/>
    <property type="match status" value="1"/>
</dbReference>
<dbReference type="InterPro" id="IPR012340">
    <property type="entry name" value="NA-bd_OB-fold"/>
</dbReference>
<dbReference type="InterPro" id="IPR006032">
    <property type="entry name" value="Ribosomal_uS12"/>
</dbReference>
<dbReference type="InterPro" id="IPR005679">
    <property type="entry name" value="Ribosomal_uS12_bac"/>
</dbReference>
<dbReference type="NCBIfam" id="TIGR00981">
    <property type="entry name" value="rpsL_bact"/>
    <property type="match status" value="1"/>
</dbReference>
<dbReference type="PANTHER" id="PTHR11652">
    <property type="entry name" value="30S RIBOSOMAL PROTEIN S12 FAMILY MEMBER"/>
    <property type="match status" value="1"/>
</dbReference>
<dbReference type="Pfam" id="PF00164">
    <property type="entry name" value="Ribosom_S12_S23"/>
    <property type="match status" value="1"/>
</dbReference>
<dbReference type="PIRSF" id="PIRSF002133">
    <property type="entry name" value="Ribosomal_S12/S23"/>
    <property type="match status" value="1"/>
</dbReference>
<dbReference type="PRINTS" id="PR01034">
    <property type="entry name" value="RIBOSOMALS12"/>
</dbReference>
<dbReference type="SUPFAM" id="SSF50249">
    <property type="entry name" value="Nucleic acid-binding proteins"/>
    <property type="match status" value="1"/>
</dbReference>
<dbReference type="PROSITE" id="PS00055">
    <property type="entry name" value="RIBOSOMAL_S12"/>
    <property type="match status" value="1"/>
</dbReference>
<organism>
    <name type="scientific">Legionella pneumophila (strain Lens)</name>
    <dbReference type="NCBI Taxonomy" id="297245"/>
    <lineage>
        <taxon>Bacteria</taxon>
        <taxon>Pseudomonadati</taxon>
        <taxon>Pseudomonadota</taxon>
        <taxon>Gammaproteobacteria</taxon>
        <taxon>Legionellales</taxon>
        <taxon>Legionellaceae</taxon>
        <taxon>Legionella</taxon>
    </lineage>
</organism>
<sequence length="126" mass="14071">MATINQLVRKPRVDVKKKSNVPALESCPQRRGVCTRVYTTTPKKPNSAMRKVARVRLTNGFEVTSYIGGEGHNLQEHSVVLIRGGRVKDLPGVRYHTVRGSLDTSGVNDRKQGRSKYGTKKPKDKK</sequence>
<keyword id="KW-0488">Methylation</keyword>
<keyword id="KW-0687">Ribonucleoprotein</keyword>
<keyword id="KW-0689">Ribosomal protein</keyword>
<keyword id="KW-0694">RNA-binding</keyword>
<keyword id="KW-0699">rRNA-binding</keyword>
<keyword id="KW-0820">tRNA-binding</keyword>
<comment type="function">
    <text evidence="2">With S4 and S5 plays an important role in translational accuracy.</text>
</comment>
<comment type="function">
    <text evidence="2">Interacts with and stabilizes bases of the 16S rRNA that are involved in tRNA selection in the A site and with the mRNA backbone. Located at the interface of the 30S and 50S subunits, it traverses the body of the 30S subunit contacting proteins on the other side and probably holding the rRNA structure together. The combined cluster of proteins S8, S12 and S17 appears to hold together the shoulder and platform of the 30S subunit.</text>
</comment>
<comment type="subunit">
    <text evidence="2">Part of the 30S ribosomal subunit. Contacts proteins S8 and S17. May interact with IF1 in the 30S initiation complex.</text>
</comment>
<comment type="similarity">
    <text evidence="2">Belongs to the universal ribosomal protein uS12 family.</text>
</comment>
<feature type="chain" id="PRO_0000146243" description="Small ribosomal subunit protein uS12">
    <location>
        <begin position="1"/>
        <end position="126"/>
    </location>
</feature>
<feature type="region of interest" description="Disordered" evidence="3">
    <location>
        <begin position="99"/>
        <end position="126"/>
    </location>
</feature>
<feature type="compositionally biased region" description="Basic residues" evidence="3">
    <location>
        <begin position="113"/>
        <end position="126"/>
    </location>
</feature>
<feature type="modified residue" description="3-methylthioaspartic acid" evidence="1">
    <location>
        <position position="89"/>
    </location>
</feature>
<name>RS12_LEGPL</name>
<evidence type="ECO:0000250" key="1"/>
<evidence type="ECO:0000255" key="2">
    <source>
        <dbReference type="HAMAP-Rule" id="MF_00403"/>
    </source>
</evidence>
<evidence type="ECO:0000256" key="3">
    <source>
        <dbReference type="SAM" id="MobiDB-lite"/>
    </source>
</evidence>
<evidence type="ECO:0000305" key="4"/>
<protein>
    <recommendedName>
        <fullName evidence="2">Small ribosomal subunit protein uS12</fullName>
    </recommendedName>
    <alternativeName>
        <fullName evidence="4">30S ribosomal protein S12</fullName>
    </alternativeName>
</protein>
<reference key="1">
    <citation type="journal article" date="2004" name="Nat. Genet.">
        <title>Evidence in the Legionella pneumophila genome for exploitation of host cell functions and high genome plasticity.</title>
        <authorList>
            <person name="Cazalet C."/>
            <person name="Rusniok C."/>
            <person name="Brueggemann H."/>
            <person name="Zidane N."/>
            <person name="Magnier A."/>
            <person name="Ma L."/>
            <person name="Tichit M."/>
            <person name="Jarraud S."/>
            <person name="Bouchier C."/>
            <person name="Vandenesch F."/>
            <person name="Kunst F."/>
            <person name="Etienne J."/>
            <person name="Glaser P."/>
            <person name="Buchrieser C."/>
        </authorList>
    </citation>
    <scope>NUCLEOTIDE SEQUENCE [LARGE SCALE GENOMIC DNA]</scope>
    <source>
        <strain>Lens</strain>
    </source>
</reference>